<reference key="1">
    <citation type="journal article" date="2000" name="Nature">
        <title>Complete DNA sequence of a serogroup A strain of Neisseria meningitidis Z2491.</title>
        <authorList>
            <person name="Parkhill J."/>
            <person name="Achtman M."/>
            <person name="James K.D."/>
            <person name="Bentley S.D."/>
            <person name="Churcher C.M."/>
            <person name="Klee S.R."/>
            <person name="Morelli G."/>
            <person name="Basham D."/>
            <person name="Brown D."/>
            <person name="Chillingworth T."/>
            <person name="Davies R.M."/>
            <person name="Davis P."/>
            <person name="Devlin K."/>
            <person name="Feltwell T."/>
            <person name="Hamlin N."/>
            <person name="Holroyd S."/>
            <person name="Jagels K."/>
            <person name="Leather S."/>
            <person name="Moule S."/>
            <person name="Mungall K.L."/>
            <person name="Quail M.A."/>
            <person name="Rajandream M.A."/>
            <person name="Rutherford K.M."/>
            <person name="Simmonds M."/>
            <person name="Skelton J."/>
            <person name="Whitehead S."/>
            <person name="Spratt B.G."/>
            <person name="Barrell B.G."/>
        </authorList>
    </citation>
    <scope>NUCLEOTIDE SEQUENCE [LARGE SCALE GENOMIC DNA]</scope>
    <source>
        <strain>DSM 15465 / Z2491</strain>
    </source>
</reference>
<organism>
    <name type="scientific">Neisseria meningitidis serogroup A / serotype 4A (strain DSM 15465 / Z2491)</name>
    <dbReference type="NCBI Taxonomy" id="122587"/>
    <lineage>
        <taxon>Bacteria</taxon>
        <taxon>Pseudomonadati</taxon>
        <taxon>Pseudomonadota</taxon>
        <taxon>Betaproteobacteria</taxon>
        <taxon>Neisseriales</taxon>
        <taxon>Neisseriaceae</taxon>
        <taxon>Neisseria</taxon>
    </lineage>
</organism>
<proteinExistence type="inferred from homology"/>
<accession>Q9JVJ9</accession>
<accession>A1IQL9</accession>
<gene>
    <name type="primary">hisE</name>
    <name type="ordered locus">NMA0807</name>
</gene>
<feature type="chain" id="PRO_0000136373" description="Phosphoribosyl-ATP pyrophosphatase">
    <location>
        <begin position="1"/>
        <end position="107"/>
    </location>
</feature>
<sequence>MGDSVLSAIQQTITQRKSANPSESYVAQLLHKGEDKILKKVIEEAGEVLMASKDKNPSHLVYEVADLWFHTMILLTHHDLKAEDVLDELARRQGLSGLAEKAARTES</sequence>
<evidence type="ECO:0000250" key="1"/>
<evidence type="ECO:0000305" key="2"/>
<comment type="catalytic activity">
    <reaction>
        <text>1-(5-phospho-beta-D-ribosyl)-ATP + H2O = 1-(5-phospho-beta-D-ribosyl)-5'-AMP + diphosphate + H(+)</text>
        <dbReference type="Rhea" id="RHEA:22828"/>
        <dbReference type="ChEBI" id="CHEBI:15377"/>
        <dbReference type="ChEBI" id="CHEBI:15378"/>
        <dbReference type="ChEBI" id="CHEBI:33019"/>
        <dbReference type="ChEBI" id="CHEBI:59457"/>
        <dbReference type="ChEBI" id="CHEBI:73183"/>
        <dbReference type="EC" id="3.6.1.31"/>
    </reaction>
</comment>
<comment type="pathway">
    <text>Amino-acid biosynthesis; L-histidine biosynthesis; L-histidine from 5-phospho-alpha-D-ribose 1-diphosphate: step 2/9.</text>
</comment>
<comment type="subcellular location">
    <subcellularLocation>
        <location evidence="1">Cytoplasm</location>
    </subcellularLocation>
</comment>
<comment type="similarity">
    <text evidence="2">Belongs to the PRA-PH family.</text>
</comment>
<dbReference type="EC" id="3.6.1.31"/>
<dbReference type="EMBL" id="AL157959">
    <property type="protein sequence ID" value="CAM08051.1"/>
    <property type="molecule type" value="Genomic_DNA"/>
</dbReference>
<dbReference type="PIR" id="G81925">
    <property type="entry name" value="G81925"/>
</dbReference>
<dbReference type="RefSeq" id="WP_002217796.1">
    <property type="nucleotide sequence ID" value="NC_003116.1"/>
</dbReference>
<dbReference type="SMR" id="Q9JVJ9"/>
<dbReference type="EnsemblBacteria" id="CAM08051">
    <property type="protein sequence ID" value="CAM08051"/>
    <property type="gene ID" value="NMA0807"/>
</dbReference>
<dbReference type="KEGG" id="nma:NMA0807"/>
<dbReference type="HOGENOM" id="CLU_123337_1_2_4"/>
<dbReference type="UniPathway" id="UPA00031">
    <property type="reaction ID" value="UER00007"/>
</dbReference>
<dbReference type="Proteomes" id="UP000000626">
    <property type="component" value="Chromosome"/>
</dbReference>
<dbReference type="GO" id="GO:0005737">
    <property type="term" value="C:cytoplasm"/>
    <property type="evidence" value="ECO:0007669"/>
    <property type="project" value="UniProtKB-SubCell"/>
</dbReference>
<dbReference type="GO" id="GO:0005524">
    <property type="term" value="F:ATP binding"/>
    <property type="evidence" value="ECO:0007669"/>
    <property type="project" value="UniProtKB-KW"/>
</dbReference>
<dbReference type="GO" id="GO:0004636">
    <property type="term" value="F:phosphoribosyl-ATP diphosphatase activity"/>
    <property type="evidence" value="ECO:0007669"/>
    <property type="project" value="UniProtKB-UniRule"/>
</dbReference>
<dbReference type="GO" id="GO:0000105">
    <property type="term" value="P:L-histidine biosynthetic process"/>
    <property type="evidence" value="ECO:0007669"/>
    <property type="project" value="UniProtKB-UniRule"/>
</dbReference>
<dbReference type="CDD" id="cd11534">
    <property type="entry name" value="NTP-PPase_HisIE_like"/>
    <property type="match status" value="1"/>
</dbReference>
<dbReference type="FunFam" id="1.10.287.1080:FF:000002">
    <property type="entry name" value="Histidine biosynthesis bifunctional protein HisIE"/>
    <property type="match status" value="1"/>
</dbReference>
<dbReference type="Gene3D" id="1.10.287.1080">
    <property type="entry name" value="MazG-like"/>
    <property type="match status" value="1"/>
</dbReference>
<dbReference type="HAMAP" id="MF_01020">
    <property type="entry name" value="HisE"/>
    <property type="match status" value="1"/>
</dbReference>
<dbReference type="InterPro" id="IPR008179">
    <property type="entry name" value="HisE"/>
</dbReference>
<dbReference type="InterPro" id="IPR021130">
    <property type="entry name" value="PRib-ATP_PPHydrolase-like"/>
</dbReference>
<dbReference type="NCBIfam" id="TIGR03188">
    <property type="entry name" value="histidine_hisI"/>
    <property type="match status" value="1"/>
</dbReference>
<dbReference type="NCBIfam" id="NF001611">
    <property type="entry name" value="PRK00400.1-3"/>
    <property type="match status" value="1"/>
</dbReference>
<dbReference type="PANTHER" id="PTHR42945">
    <property type="entry name" value="HISTIDINE BIOSYNTHESIS BIFUNCTIONAL PROTEIN"/>
    <property type="match status" value="1"/>
</dbReference>
<dbReference type="PANTHER" id="PTHR42945:SF9">
    <property type="entry name" value="HISTIDINE BIOSYNTHESIS BIFUNCTIONAL PROTEIN HISIE"/>
    <property type="match status" value="1"/>
</dbReference>
<dbReference type="Pfam" id="PF01503">
    <property type="entry name" value="PRA-PH"/>
    <property type="match status" value="1"/>
</dbReference>
<dbReference type="SUPFAM" id="SSF101386">
    <property type="entry name" value="all-alpha NTP pyrophosphatases"/>
    <property type="match status" value="1"/>
</dbReference>
<name>HIS2_NEIMA</name>
<keyword id="KW-0028">Amino-acid biosynthesis</keyword>
<keyword id="KW-0067">ATP-binding</keyword>
<keyword id="KW-0963">Cytoplasm</keyword>
<keyword id="KW-0368">Histidine biosynthesis</keyword>
<keyword id="KW-0378">Hydrolase</keyword>
<keyword id="KW-0547">Nucleotide-binding</keyword>
<protein>
    <recommendedName>
        <fullName>Phosphoribosyl-ATP pyrophosphatase</fullName>
        <shortName>PRA-PH</shortName>
        <ecNumber>3.6.1.31</ecNumber>
    </recommendedName>
</protein>